<reference key="1">
    <citation type="journal article" date="2002" name="Nature">
        <title>Complete genome sequence of the model actinomycete Streptomyces coelicolor A3(2).</title>
        <authorList>
            <person name="Bentley S.D."/>
            <person name="Chater K.F."/>
            <person name="Cerdeno-Tarraga A.-M."/>
            <person name="Challis G.L."/>
            <person name="Thomson N.R."/>
            <person name="James K.D."/>
            <person name="Harris D.E."/>
            <person name="Quail M.A."/>
            <person name="Kieser H."/>
            <person name="Harper D."/>
            <person name="Bateman A."/>
            <person name="Brown S."/>
            <person name="Chandra G."/>
            <person name="Chen C.W."/>
            <person name="Collins M."/>
            <person name="Cronin A."/>
            <person name="Fraser A."/>
            <person name="Goble A."/>
            <person name="Hidalgo J."/>
            <person name="Hornsby T."/>
            <person name="Howarth S."/>
            <person name="Huang C.-H."/>
            <person name="Kieser T."/>
            <person name="Larke L."/>
            <person name="Murphy L.D."/>
            <person name="Oliver K."/>
            <person name="O'Neil S."/>
            <person name="Rabbinowitsch E."/>
            <person name="Rajandream M.A."/>
            <person name="Rutherford K.M."/>
            <person name="Rutter S."/>
            <person name="Seeger K."/>
            <person name="Saunders D."/>
            <person name="Sharp S."/>
            <person name="Squares R."/>
            <person name="Squares S."/>
            <person name="Taylor K."/>
            <person name="Warren T."/>
            <person name="Wietzorrek A."/>
            <person name="Woodward J.R."/>
            <person name="Barrell B.G."/>
            <person name="Parkhill J."/>
            <person name="Hopwood D.A."/>
        </authorList>
    </citation>
    <scope>NUCLEOTIDE SEQUENCE [LARGE SCALE GENOMIC DNA]</scope>
    <source>
        <strain>ATCC BAA-471 / A3(2) / M145</strain>
    </source>
</reference>
<keyword id="KW-0963">Cytoplasm</keyword>
<keyword id="KW-0488">Methylation</keyword>
<keyword id="KW-0648">Protein biosynthesis</keyword>
<keyword id="KW-1185">Reference proteome</keyword>
<name>RF1_STRCO</name>
<comment type="function">
    <text evidence="1">Peptide chain release factor 1 directs the termination of translation in response to the peptide chain termination codons UAG and UAA.</text>
</comment>
<comment type="subcellular location">
    <subcellularLocation>
        <location evidence="1">Cytoplasm</location>
    </subcellularLocation>
</comment>
<comment type="PTM">
    <text evidence="1">Methylated by PrmC. Methylation increases the termination efficiency of RF1.</text>
</comment>
<comment type="similarity">
    <text evidence="1">Belongs to the prokaryotic/mitochondrial release factor family.</text>
</comment>
<dbReference type="EMBL" id="AL939123">
    <property type="protein sequence ID" value="CAB94531.1"/>
    <property type="molecule type" value="Genomic_DNA"/>
</dbReference>
<dbReference type="RefSeq" id="NP_629499.1">
    <property type="nucleotide sequence ID" value="NC_003888.3"/>
</dbReference>
<dbReference type="RefSeq" id="WP_003973637.1">
    <property type="nucleotide sequence ID" value="NZ_VNID01000011.1"/>
</dbReference>
<dbReference type="SMR" id="Q9K4E4"/>
<dbReference type="FunCoup" id="Q9K4E4">
    <property type="interactions" value="382"/>
</dbReference>
<dbReference type="STRING" id="100226.gene:17763012"/>
<dbReference type="PaxDb" id="100226-SCO5360"/>
<dbReference type="GeneID" id="97462274"/>
<dbReference type="KEGG" id="sco:SCO5360"/>
<dbReference type="PATRIC" id="fig|100226.15.peg.5440"/>
<dbReference type="eggNOG" id="COG0216">
    <property type="taxonomic scope" value="Bacteria"/>
</dbReference>
<dbReference type="HOGENOM" id="CLU_036856_0_1_11"/>
<dbReference type="InParanoid" id="Q9K4E4"/>
<dbReference type="OrthoDB" id="9806673at2"/>
<dbReference type="PhylomeDB" id="Q9K4E4"/>
<dbReference type="Proteomes" id="UP000001973">
    <property type="component" value="Chromosome"/>
</dbReference>
<dbReference type="GO" id="GO:0005737">
    <property type="term" value="C:cytoplasm"/>
    <property type="evidence" value="ECO:0007669"/>
    <property type="project" value="UniProtKB-SubCell"/>
</dbReference>
<dbReference type="GO" id="GO:0016149">
    <property type="term" value="F:translation release factor activity, codon specific"/>
    <property type="evidence" value="ECO:0007669"/>
    <property type="project" value="UniProtKB-UniRule"/>
</dbReference>
<dbReference type="FunFam" id="3.30.160.20:FF:000004">
    <property type="entry name" value="Peptide chain release factor 1"/>
    <property type="match status" value="1"/>
</dbReference>
<dbReference type="FunFam" id="3.30.70.1660:FF:000002">
    <property type="entry name" value="Peptide chain release factor 1"/>
    <property type="match status" value="1"/>
</dbReference>
<dbReference type="Gene3D" id="3.30.160.20">
    <property type="match status" value="1"/>
</dbReference>
<dbReference type="Gene3D" id="3.30.70.1660">
    <property type="match status" value="1"/>
</dbReference>
<dbReference type="Gene3D" id="6.10.140.1950">
    <property type="match status" value="1"/>
</dbReference>
<dbReference type="HAMAP" id="MF_00093">
    <property type="entry name" value="Rel_fac_1"/>
    <property type="match status" value="1"/>
</dbReference>
<dbReference type="InterPro" id="IPR005139">
    <property type="entry name" value="PCRF"/>
</dbReference>
<dbReference type="InterPro" id="IPR000352">
    <property type="entry name" value="Pep_chain_release_fac_I"/>
</dbReference>
<dbReference type="InterPro" id="IPR045853">
    <property type="entry name" value="Pep_chain_release_fac_I_sf"/>
</dbReference>
<dbReference type="InterPro" id="IPR050057">
    <property type="entry name" value="Prokaryotic/Mito_RF"/>
</dbReference>
<dbReference type="InterPro" id="IPR004373">
    <property type="entry name" value="RF-1"/>
</dbReference>
<dbReference type="NCBIfam" id="TIGR00019">
    <property type="entry name" value="prfA"/>
    <property type="match status" value="1"/>
</dbReference>
<dbReference type="NCBIfam" id="NF001859">
    <property type="entry name" value="PRK00591.1"/>
    <property type="match status" value="1"/>
</dbReference>
<dbReference type="PANTHER" id="PTHR43804">
    <property type="entry name" value="LD18447P"/>
    <property type="match status" value="1"/>
</dbReference>
<dbReference type="PANTHER" id="PTHR43804:SF7">
    <property type="entry name" value="LD18447P"/>
    <property type="match status" value="1"/>
</dbReference>
<dbReference type="Pfam" id="PF03462">
    <property type="entry name" value="PCRF"/>
    <property type="match status" value="1"/>
</dbReference>
<dbReference type="Pfam" id="PF00472">
    <property type="entry name" value="RF-1"/>
    <property type="match status" value="1"/>
</dbReference>
<dbReference type="SMART" id="SM00937">
    <property type="entry name" value="PCRF"/>
    <property type="match status" value="1"/>
</dbReference>
<dbReference type="SUPFAM" id="SSF75620">
    <property type="entry name" value="Release factor"/>
    <property type="match status" value="1"/>
</dbReference>
<dbReference type="PROSITE" id="PS00745">
    <property type="entry name" value="RF_PROK_I"/>
    <property type="match status" value="1"/>
</dbReference>
<feature type="chain" id="PRO_0000177749" description="Peptide chain release factor 1">
    <location>
        <begin position="1"/>
        <end position="358"/>
    </location>
</feature>
<feature type="modified residue" description="N5-methylglutamine" evidence="1">
    <location>
        <position position="237"/>
    </location>
</feature>
<protein>
    <recommendedName>
        <fullName evidence="1">Peptide chain release factor 1</fullName>
        <shortName evidence="1">RF-1</shortName>
    </recommendedName>
</protein>
<organism>
    <name type="scientific">Streptomyces coelicolor (strain ATCC BAA-471 / A3(2) / M145)</name>
    <dbReference type="NCBI Taxonomy" id="100226"/>
    <lineage>
        <taxon>Bacteria</taxon>
        <taxon>Bacillati</taxon>
        <taxon>Actinomycetota</taxon>
        <taxon>Actinomycetes</taxon>
        <taxon>Kitasatosporales</taxon>
        <taxon>Streptomycetaceae</taxon>
        <taxon>Streptomyces</taxon>
        <taxon>Streptomyces albidoflavus group</taxon>
    </lineage>
</organism>
<accession>Q9K4E4</accession>
<evidence type="ECO:0000255" key="1">
    <source>
        <dbReference type="HAMAP-Rule" id="MF_00093"/>
    </source>
</evidence>
<gene>
    <name evidence="1" type="primary">prfA</name>
    <name type="ordered locus">SCO5360</name>
    <name type="ORF">2SC6G5.04</name>
</gene>
<sequence>MFEAVEELVAEHADLEKKLADPSVHSDQANARKLNKRYAELTPIVATFRSWKQTGDDMETAREFAADDPDFAAEVKELDKQRDELTEKLRLLLVPRDPSDDKDVILEIKAGAGGDESALFAGDLLRMYLRYAERIGWKTEIIDSTESELGGYKDVQVAVKTKGGQGATEPGQGVWARLKYEGGVHRVQRVPATESQGRIHTSAAGVLVTPEAEEIDVEINPNDLRIDVYRSSGPGGQSVNTTDSAVRITHIPTGVVASCQNEKSQLQNKEQAMRILRSRLLAAAQEEAEKEAADARRSQVRTVDRSEKIRTYNFPENRISDHRVGFKAYNLDQVLDGDLDSVIQACVDADSAAKLAAA</sequence>
<proteinExistence type="inferred from homology"/>